<feature type="chain" id="PRO_0000233016" description="L-glutamine:2-deoxy-scyllo-inosose aminotransferase">
    <location>
        <begin position="1"/>
        <end position="418"/>
    </location>
</feature>
<feature type="modified residue" description="N6-(pyridoxal phosphate)lysine" evidence="1">
    <location>
        <position position="192"/>
    </location>
</feature>
<feature type="helix" evidence="6">
    <location>
        <begin position="16"/>
        <end position="28"/>
    </location>
</feature>
<feature type="helix" evidence="6">
    <location>
        <begin position="43"/>
        <end position="55"/>
    </location>
</feature>
<feature type="strand" evidence="6">
    <location>
        <begin position="58"/>
        <end position="64"/>
    </location>
</feature>
<feature type="helix" evidence="6">
    <location>
        <begin position="66"/>
        <end position="76"/>
    </location>
</feature>
<feature type="strand" evidence="6">
    <location>
        <begin position="84"/>
        <end position="91"/>
    </location>
</feature>
<feature type="helix" evidence="6">
    <location>
        <begin position="94"/>
        <end position="101"/>
    </location>
</feature>
<feature type="strand" evidence="6">
    <location>
        <begin position="105"/>
        <end position="109"/>
    </location>
</feature>
<feature type="turn" evidence="6">
    <location>
        <begin position="113"/>
        <end position="115"/>
    </location>
</feature>
<feature type="helix" evidence="6">
    <location>
        <begin position="120"/>
        <end position="123"/>
    </location>
</feature>
<feature type="helix" evidence="6">
    <location>
        <begin position="124"/>
        <end position="126"/>
    </location>
</feature>
<feature type="strand" evidence="6">
    <location>
        <begin position="131"/>
        <end position="134"/>
    </location>
</feature>
<feature type="helix" evidence="6">
    <location>
        <begin position="146"/>
        <end position="155"/>
    </location>
</feature>
<feature type="strand" evidence="6">
    <location>
        <begin position="159"/>
        <end position="163"/>
    </location>
</feature>
<feature type="strand" evidence="6">
    <location>
        <begin position="179"/>
        <end position="187"/>
    </location>
</feature>
<feature type="strand" evidence="6">
    <location>
        <begin position="192"/>
        <end position="194"/>
    </location>
</feature>
<feature type="strand" evidence="6">
    <location>
        <begin position="196"/>
        <end position="198"/>
    </location>
</feature>
<feature type="strand" evidence="6">
    <location>
        <begin position="200"/>
        <end position="205"/>
    </location>
</feature>
<feature type="helix" evidence="6">
    <location>
        <begin position="207"/>
        <end position="217"/>
    </location>
</feature>
<feature type="strand" evidence="6">
    <location>
        <begin position="221"/>
        <end position="223"/>
    </location>
</feature>
<feature type="helix" evidence="6">
    <location>
        <begin position="227"/>
        <end position="229"/>
    </location>
</feature>
<feature type="strand" evidence="6">
    <location>
        <begin position="235"/>
        <end position="239"/>
    </location>
</feature>
<feature type="helix" evidence="6">
    <location>
        <begin position="252"/>
        <end position="262"/>
    </location>
</feature>
<feature type="helix" evidence="6">
    <location>
        <begin position="265"/>
        <end position="283"/>
    </location>
</feature>
<feature type="strand" evidence="6">
    <location>
        <begin position="289"/>
        <end position="291"/>
    </location>
</feature>
<feature type="strand" evidence="6">
    <location>
        <begin position="298"/>
        <end position="300"/>
    </location>
</feature>
<feature type="strand" evidence="6">
    <location>
        <begin position="304"/>
        <end position="310"/>
    </location>
</feature>
<feature type="helix" evidence="6">
    <location>
        <begin position="312"/>
        <end position="314"/>
    </location>
</feature>
<feature type="turn" evidence="6">
    <location>
        <begin position="315"/>
        <end position="317"/>
    </location>
</feature>
<feature type="helix" evidence="6">
    <location>
        <begin position="320"/>
        <end position="331"/>
    </location>
</feature>
<feature type="turn" evidence="6">
    <location>
        <begin position="335"/>
        <end position="337"/>
    </location>
</feature>
<feature type="helix" evidence="6">
    <location>
        <begin position="345"/>
        <end position="347"/>
    </location>
</feature>
<feature type="helix" evidence="6">
    <location>
        <begin position="353"/>
        <end position="355"/>
    </location>
</feature>
<feature type="helix" evidence="6">
    <location>
        <begin position="361"/>
        <end position="364"/>
    </location>
</feature>
<feature type="helix" evidence="6">
    <location>
        <begin position="367"/>
        <end position="371"/>
    </location>
</feature>
<feature type="helix" evidence="6">
    <location>
        <begin position="376"/>
        <end position="384"/>
    </location>
</feature>
<feature type="strand" evidence="6">
    <location>
        <begin position="385"/>
        <end position="389"/>
    </location>
</feature>
<feature type="helix" evidence="6">
    <location>
        <begin position="390"/>
        <end position="394"/>
    </location>
</feature>
<feature type="helix" evidence="6">
    <location>
        <begin position="397"/>
        <end position="412"/>
    </location>
</feature>
<keyword id="KW-0002">3D-structure</keyword>
<keyword id="KW-0032">Aminotransferase</keyword>
<keyword id="KW-0045">Antibiotic biosynthesis</keyword>
<keyword id="KW-0663">Pyridoxal phosphate</keyword>
<keyword id="KW-0808">Transferase</keyword>
<proteinExistence type="evidence at protein level"/>
<evidence type="ECO:0000250" key="1"/>
<evidence type="ECO:0000269" key="2">
    <source>
    </source>
</evidence>
<evidence type="ECO:0000269" key="3">
    <source>
    </source>
</evidence>
<evidence type="ECO:0000269" key="4">
    <source>
    </source>
</evidence>
<evidence type="ECO:0000305" key="5"/>
<evidence type="ECO:0007829" key="6">
    <source>
        <dbReference type="PDB" id="2C81"/>
    </source>
</evidence>
<name>GLDSA_NIACI</name>
<organism>
    <name type="scientific">Niallia circulans</name>
    <name type="common">Bacillus circulans</name>
    <dbReference type="NCBI Taxonomy" id="1397"/>
    <lineage>
        <taxon>Bacteria</taxon>
        <taxon>Bacillati</taxon>
        <taxon>Bacillota</taxon>
        <taxon>Bacilli</taxon>
        <taxon>Bacillales</taxon>
        <taxon>Bacillaceae</taxon>
        <taxon>Niallia</taxon>
    </lineage>
</organism>
<accession>Q8G8Y2</accession>
<comment type="function">
    <text evidence="2 3 4">Catalyzes the PLP-dependent transamination of 2-deoxy-scyllo-inosose (2-DOI) to form 2-deoxy-scyllo-inosamine (2-DOIA) using L-glutamine as the amino donor. Also catalyzes the transamination of 3-amino-2,3-dideoxy-scyllo-inosose (keto-2-DOIA) into 2-deoxystreptamine (2-DOS).</text>
</comment>
<comment type="catalytic activity">
    <reaction evidence="2 3 4">
        <text>2-deoxy-L-scyllo-inosose + L-glutamine = 2-deoxy-scyllo-inosamine + 2-oxoglutaramate</text>
        <dbReference type="Rhea" id="RHEA:34147"/>
        <dbReference type="ChEBI" id="CHEBI:16769"/>
        <dbReference type="ChEBI" id="CHEBI:58359"/>
        <dbReference type="ChEBI" id="CHEBI:64796"/>
        <dbReference type="ChEBI" id="CHEBI:65003"/>
        <dbReference type="EC" id="2.6.1.100"/>
    </reaction>
</comment>
<comment type="catalytic activity">
    <reaction evidence="2 3 4">
        <text>3-amino-2,3-dideoxy-scyllo-inosose + L-glutamine = 2-deoxystreptamine + 2-oxoglutaramate</text>
        <dbReference type="Rhea" id="RHEA:34151"/>
        <dbReference type="ChEBI" id="CHEBI:16769"/>
        <dbReference type="ChEBI" id="CHEBI:58359"/>
        <dbReference type="ChEBI" id="CHEBI:65002"/>
        <dbReference type="ChEBI" id="CHEBI:65069"/>
        <dbReference type="EC" id="2.6.1.101"/>
    </reaction>
</comment>
<comment type="cofactor">
    <cofactor evidence="1">
        <name>pyridoxal 5'-phosphate</name>
        <dbReference type="ChEBI" id="CHEBI:597326"/>
    </cofactor>
</comment>
<comment type="pathway">
    <text>Metabolic intermediate biosynthesis; 2-deoxystreptamine biosynthesis; 2-deoxystreptamine from D-glucose 6-phosphate: step 2/4.</text>
</comment>
<comment type="pathway">
    <text>Metabolic intermediate biosynthesis; 2-deoxystreptamine biosynthesis; 2-deoxystreptamine from D-glucose 6-phosphate: step 4/4.</text>
</comment>
<comment type="pathway">
    <text>Antibiotic biosynthesis; butirosin biosynthesis.</text>
</comment>
<comment type="similarity">
    <text evidence="5">Belongs to the DegT/DnrJ/EryC1 family. L-glutamine:2-deoxy-scyllo-inosose/scyllo-inosose aminotransferase subfamily.</text>
</comment>
<sequence>MTIPFDHWPEWPQHSDRTRRKIEEVFQSNRWAISGYWTGEESMERKFAKAFADFNGVPYCVPTTSGSTALMLALEALGIGEGDEVIVPSLTWIATATAVLNVNALPVFVDVEADTYCIDPQLIKSAITDKTKAIIPVHLFGSMANMDEINEIAQEHNLFVIEDCAQSHGSVWNNQRAGTIGDIGAFSCQQGKVLTAGEGGIIVTKNPRLFELIQQLRADSRVYCDDSSELMHGDMQLVKKGDIQGSNYCLSEFQSAILLDQLQELDDKNAIREKNAMFLNDALSKIDGIKVMKRPPQVSRQTYYGYVFRFDPVKFGGLNADQFCEILREKLNMGTFYLHPPYLPVHKNPLFCPWTKNRYLKSVRKTEAYWRGLHYPVSERASGQSIVIHHAILLAEPSHLSLLVDAVAELARKFCVTH</sequence>
<reference key="1">
    <citation type="journal article" date="2002" name="Chem. Commun. (Camb.)">
        <title>Biosynthesis of aminoglycoside antibiotics: cloning, expression and characterisation of an aminotransferase involved in the pathway to 2-deoxystreptamine.</title>
        <authorList>
            <person name="Huang F."/>
            <person name="Li Y."/>
            <person name="Yu J."/>
            <person name="Spencer J.B."/>
        </authorList>
    </citation>
    <scope>NUCLEOTIDE SEQUENCE [GENOMIC DNA]</scope>
    <scope>FUNCTION</scope>
    <scope>CATALYTIC ACTIVITY</scope>
</reference>
<reference key="2">
    <citation type="journal article" date="2002" name="J. Antibiot.">
        <title>Identification of L-glutamine: 2-deoxy-scyllo-inosose aminotransferase required for the biosynthesis of butirosin in Bacillus circulans.</title>
        <authorList>
            <person name="Tamegai H."/>
            <person name="Nango E."/>
            <person name="Kuwahara M."/>
            <person name="Yamamoto H."/>
            <person name="Ota Y."/>
            <person name="Kuriki H."/>
            <person name="Eguchi T."/>
            <person name="Kakinuma K."/>
        </authorList>
    </citation>
    <scope>NUCLEOTIDE SEQUENCE [GENOMIC DNA]</scope>
    <scope>FUNCTION</scope>
    <scope>CATALYTIC ACTIVITY</scope>
    <source>
        <strain>SANK 72073</strain>
    </source>
</reference>
<reference key="3">
    <citation type="journal article" date="2005" name="J. Am. Chem. Soc.">
        <title>Stereochemical recognition of doubly functional aminotransferase in 2-deoxystreptamine biosynthesis.</title>
        <authorList>
            <person name="Yokoyama K."/>
            <person name="Kudo F."/>
            <person name="Kuwahara M."/>
            <person name="Inomata K."/>
            <person name="Tamegai H."/>
            <person name="Eguchi T."/>
            <person name="Kakinuma K."/>
        </authorList>
    </citation>
    <scope>FUNCTION</scope>
    <scope>CATALYTIC ACTIVITY</scope>
    <scope>REACTION STEREOCHEMISTRY</scope>
    <source>
        <strain>SANK 72073</strain>
    </source>
</reference>
<protein>
    <recommendedName>
        <fullName>L-glutamine:2-deoxy-scyllo-inosose aminotransferase</fullName>
        <shortName>L-glutamine:DOI aminotransferase</shortName>
        <ecNumber evidence="2 3 4">2.6.1.100</ecNumber>
    </recommendedName>
    <alternativeName>
        <fullName>L-glutamine:3-amino-2,3-dideoxy-scyllo-inosose aminotransferase</fullName>
        <shortName>L-glutamine:amino-DOI aminotransferase</shortName>
        <ecNumber evidence="2 3 4">2.6.1.101</ecNumber>
    </alternativeName>
</protein>
<gene>
    <name type="primary">btrR</name>
    <name type="synonym">btrS</name>
</gene>
<dbReference type="EC" id="2.6.1.100" evidence="2 3 4"/>
<dbReference type="EC" id="2.6.1.101" evidence="2 3 4"/>
<dbReference type="EMBL" id="AJ494863">
    <property type="protein sequence ID" value="CAD41947.1"/>
    <property type="molecule type" value="Genomic_DNA"/>
</dbReference>
<dbReference type="EMBL" id="AB097196">
    <property type="protein sequence ID" value="BAE07061.1"/>
    <property type="molecule type" value="Genomic_DNA"/>
</dbReference>
<dbReference type="PDB" id="2C7T">
    <property type="method" value="X-ray"/>
    <property type="resolution" value="2.10 A"/>
    <property type="chains" value="A=1-418"/>
</dbReference>
<dbReference type="PDB" id="2C81">
    <property type="method" value="X-ray"/>
    <property type="resolution" value="1.70 A"/>
    <property type="chains" value="A=1-418"/>
</dbReference>
<dbReference type="PDB" id="5W71">
    <property type="method" value="X-ray"/>
    <property type="resolution" value="2.10 A"/>
    <property type="chains" value="A/B=1-418"/>
</dbReference>
<dbReference type="PDBsum" id="2C7T"/>
<dbReference type="PDBsum" id="2C81"/>
<dbReference type="PDBsum" id="5W71"/>
<dbReference type="SMR" id="Q8G8Y2"/>
<dbReference type="KEGG" id="ag:BAE07061"/>
<dbReference type="BioCyc" id="MetaCyc:MONOMER-17229"/>
<dbReference type="BRENDA" id="2.6.1.100">
    <property type="organism ID" value="649"/>
</dbReference>
<dbReference type="BRENDA" id="2.6.1.101">
    <property type="organism ID" value="649"/>
</dbReference>
<dbReference type="UniPathway" id="UPA00907">
    <property type="reaction ID" value="UER00922"/>
</dbReference>
<dbReference type="UniPathway" id="UPA00907">
    <property type="reaction ID" value="UER00924"/>
</dbReference>
<dbReference type="UniPathway" id="UPA00964"/>
<dbReference type="EvolutionaryTrace" id="Q8G8Y2"/>
<dbReference type="GO" id="GO:0030170">
    <property type="term" value="F:pyridoxal phosphate binding"/>
    <property type="evidence" value="ECO:0007669"/>
    <property type="project" value="TreeGrafter"/>
</dbReference>
<dbReference type="GO" id="GO:0008483">
    <property type="term" value="F:transaminase activity"/>
    <property type="evidence" value="ECO:0007669"/>
    <property type="project" value="UniProtKB-KW"/>
</dbReference>
<dbReference type="GO" id="GO:0017000">
    <property type="term" value="P:antibiotic biosynthetic process"/>
    <property type="evidence" value="ECO:0007669"/>
    <property type="project" value="UniProtKB-KW"/>
</dbReference>
<dbReference type="GO" id="GO:0000271">
    <property type="term" value="P:polysaccharide biosynthetic process"/>
    <property type="evidence" value="ECO:0007669"/>
    <property type="project" value="TreeGrafter"/>
</dbReference>
<dbReference type="CDD" id="cd00616">
    <property type="entry name" value="AHBA_syn"/>
    <property type="match status" value="1"/>
</dbReference>
<dbReference type="Gene3D" id="3.90.1150.10">
    <property type="entry name" value="Aspartate Aminotransferase, domain 1"/>
    <property type="match status" value="1"/>
</dbReference>
<dbReference type="Gene3D" id="3.40.640.10">
    <property type="entry name" value="Type I PLP-dependent aspartate aminotransferase-like (Major domain)"/>
    <property type="match status" value="1"/>
</dbReference>
<dbReference type="InterPro" id="IPR000653">
    <property type="entry name" value="DegT/StrS_aminotransferase"/>
</dbReference>
<dbReference type="InterPro" id="IPR015424">
    <property type="entry name" value="PyrdxlP-dep_Trfase"/>
</dbReference>
<dbReference type="InterPro" id="IPR015421">
    <property type="entry name" value="PyrdxlP-dep_Trfase_major"/>
</dbReference>
<dbReference type="InterPro" id="IPR015422">
    <property type="entry name" value="PyrdxlP-dep_Trfase_small"/>
</dbReference>
<dbReference type="PANTHER" id="PTHR30244:SF34">
    <property type="entry name" value="DTDP-4-AMINO-4,6-DIDEOXYGALACTOSE TRANSAMINASE"/>
    <property type="match status" value="1"/>
</dbReference>
<dbReference type="PANTHER" id="PTHR30244">
    <property type="entry name" value="TRANSAMINASE"/>
    <property type="match status" value="1"/>
</dbReference>
<dbReference type="Pfam" id="PF01041">
    <property type="entry name" value="DegT_DnrJ_EryC1"/>
    <property type="match status" value="1"/>
</dbReference>
<dbReference type="PIRSF" id="PIRSF000390">
    <property type="entry name" value="PLP_StrS"/>
    <property type="match status" value="1"/>
</dbReference>
<dbReference type="SUPFAM" id="SSF53383">
    <property type="entry name" value="PLP-dependent transferases"/>
    <property type="match status" value="1"/>
</dbReference>